<feature type="signal peptide" evidence="1">
    <location>
        <begin position="1"/>
        <end position="35"/>
    </location>
</feature>
<feature type="chain" id="PRO_5009752552" description="Secreted LysM effector LysM14">
    <location>
        <begin position="36"/>
        <end position="384"/>
    </location>
</feature>
<feature type="domain" description="LysM" evidence="2">
    <location>
        <begin position="64"/>
        <end position="112"/>
    </location>
</feature>
<feature type="region of interest" description="Disordered" evidence="3">
    <location>
        <begin position="185"/>
        <end position="220"/>
    </location>
</feature>
<protein>
    <recommendedName>
        <fullName evidence="5">Secreted LysM effector LysM14</fullName>
    </recommendedName>
    <alternativeName>
        <fullName evidence="5">LysM domain-containing protein 14</fullName>
    </alternativeName>
</protein>
<sequence length="384" mass="41158">MGWSPRWKVMLRGIFNAMISIHILLSLLFAHIATAQSGRSFGDSHGHSLNKRAPLAPDGDGICYTYTIQEGDTCAKLAQRYQVTTSNIETWNVGSWGWPGCAKIKQGDFVCLSSGALPMPVALPNAVCGPQVPGTRRPIKYSDLASLNPCPSTQCCAISGQCGTLSNFCDVSPLGSCIFNCGPKSTTKSAASKTTTTSNPTTTSKTTITSKPTTTSKPTTISKTTKAVMVTLTSIQMVPPPDKTTASVAPTATWQITIYEKGGCKGDYYSAQGHEDQIVGGCIVLADNTDTKISDTTTSCRWWSDGGLNWGTCASSKLVNARSFFIKSGKCVIYSGKKCQNEDWVGETYGAFKGCQDGNTGYLSPRKDAKWGSLQCFEYKSYTT</sequence>
<name>LYS14_PENEN</name>
<keyword id="KW-0147">Chitin-binding</keyword>
<keyword id="KW-1185">Reference proteome</keyword>
<keyword id="KW-0964">Secreted</keyword>
<keyword id="KW-0732">Signal</keyword>
<keyword id="KW-0843">Virulence</keyword>
<reference key="1">
    <citation type="journal article" date="2015" name="Mol. Plant Microbe Interact.">
        <title>Genome, transcriptome, and functional analyses of Penicillium expansum provide new insights into secondary metabolism and pathogenicity.</title>
        <authorList>
            <person name="Ballester A.R."/>
            <person name="Marcet-Houben M."/>
            <person name="Levin E."/>
            <person name="Sela N."/>
            <person name="Selma-Lazaro C."/>
            <person name="Carmona L."/>
            <person name="Wisniewski M."/>
            <person name="Droby S."/>
            <person name="Gonzalez-Candelas L."/>
            <person name="Gabaldon T."/>
        </authorList>
    </citation>
    <scope>NUCLEOTIDE SEQUENCE [LARGE SCALE GENOMIC DNA]</scope>
    <source>
        <strain>MD-8</strain>
    </source>
</reference>
<reference key="2">
    <citation type="journal article" date="2020" name="Mol. Genet. Genomics">
        <title>Multiple transcriptomic analyses and characterization of pathogen-related core effectors and LysM family members reveal their differential roles in fungal growth and pathogenicity in Penicillium expansum.</title>
        <authorList>
            <person name="Chen D."/>
            <person name="Li G."/>
            <person name="Liu J."/>
            <person name="Wisniewski M."/>
            <person name="Droby S."/>
            <person name="Levin E."/>
            <person name="Huang S."/>
            <person name="Liu Y."/>
        </authorList>
    </citation>
    <scope>FUNCTION</scope>
    <scope>DISRUPTION PHENOTYPE</scope>
    <scope>DOMAIN</scope>
</reference>
<dbReference type="EMBL" id="JQFZ01000051">
    <property type="protein sequence ID" value="KGO61087.1"/>
    <property type="molecule type" value="Genomic_DNA"/>
</dbReference>
<dbReference type="RefSeq" id="XP_016601984.1">
    <property type="nucleotide sequence ID" value="XM_016747436.1"/>
</dbReference>
<dbReference type="SMR" id="A0A0A2J621"/>
<dbReference type="STRING" id="27334.A0A0A2J621"/>
<dbReference type="GeneID" id="27682856"/>
<dbReference type="VEuPathDB" id="FungiDB:PEXP_015210"/>
<dbReference type="HOGENOM" id="CLU_037347_0_0_1"/>
<dbReference type="OrthoDB" id="73875at2759"/>
<dbReference type="PhylomeDB" id="A0A0A2J621"/>
<dbReference type="Proteomes" id="UP000030143">
    <property type="component" value="Unassembled WGS sequence"/>
</dbReference>
<dbReference type="GO" id="GO:0005576">
    <property type="term" value="C:extracellular region"/>
    <property type="evidence" value="ECO:0007669"/>
    <property type="project" value="UniProtKB-SubCell"/>
</dbReference>
<dbReference type="GO" id="GO:0008061">
    <property type="term" value="F:chitin binding"/>
    <property type="evidence" value="ECO:0007669"/>
    <property type="project" value="UniProtKB-KW"/>
</dbReference>
<dbReference type="CDD" id="cd00118">
    <property type="entry name" value="LysM"/>
    <property type="match status" value="1"/>
</dbReference>
<dbReference type="Gene3D" id="3.10.350.10">
    <property type="entry name" value="LysM domain"/>
    <property type="match status" value="1"/>
</dbReference>
<dbReference type="InterPro" id="IPR053214">
    <property type="entry name" value="LysM12-like"/>
</dbReference>
<dbReference type="InterPro" id="IPR018392">
    <property type="entry name" value="LysM_dom"/>
</dbReference>
<dbReference type="InterPro" id="IPR036779">
    <property type="entry name" value="LysM_dom_sf"/>
</dbReference>
<dbReference type="PANTHER" id="PTHR47700:SF2">
    <property type="entry name" value="CHITINASE"/>
    <property type="match status" value="1"/>
</dbReference>
<dbReference type="PANTHER" id="PTHR47700">
    <property type="entry name" value="V CHITINASE, PUTATIVE (AFU_ORTHOLOGUE AFUA_6G13720)-RELATED"/>
    <property type="match status" value="1"/>
</dbReference>
<dbReference type="Pfam" id="PF01476">
    <property type="entry name" value="LysM"/>
    <property type="match status" value="1"/>
</dbReference>
<dbReference type="Pfam" id="PF25139">
    <property type="entry name" value="LysM14_C"/>
    <property type="match status" value="1"/>
</dbReference>
<dbReference type="SMART" id="SM00257">
    <property type="entry name" value="LysM"/>
    <property type="match status" value="1"/>
</dbReference>
<dbReference type="SUPFAM" id="SSF54106">
    <property type="entry name" value="LysM domain"/>
    <property type="match status" value="1"/>
</dbReference>
<dbReference type="PROSITE" id="PS51782">
    <property type="entry name" value="LYSM"/>
    <property type="match status" value="1"/>
</dbReference>
<gene>
    <name evidence="5" type="primary">LysM14</name>
    <name type="ORF">PEX2_101660</name>
</gene>
<proteinExistence type="inferred from homology"/>
<accession>A0A0A2J621</accession>
<organism>
    <name type="scientific">Penicillium expansum</name>
    <name type="common">Blue mold rot fungus</name>
    <dbReference type="NCBI Taxonomy" id="27334"/>
    <lineage>
        <taxon>Eukaryota</taxon>
        <taxon>Fungi</taxon>
        <taxon>Dikarya</taxon>
        <taxon>Ascomycota</taxon>
        <taxon>Pezizomycotina</taxon>
        <taxon>Eurotiomycetes</taxon>
        <taxon>Eurotiomycetidae</taxon>
        <taxon>Eurotiales</taxon>
        <taxon>Aspergillaceae</taxon>
        <taxon>Penicillium</taxon>
    </lineage>
</organism>
<comment type="function">
    <text evidence="7">Secreted LysM effector that might have a role in sequestration of chitin oligosaccharides (breakdown products of fungal cell walls that are released during invasion and act as triggers of host immunity) to dampen host defense.</text>
</comment>
<comment type="subcellular location">
    <subcellularLocation>
        <location evidence="7">Secreted</location>
    </subcellularLocation>
</comment>
<comment type="domain">
    <text evidence="7">The LysM (lysin motif) domains are small globular domains involved in binding chitin in eukaryotes. LysM14 contains one LysM domain.</text>
</comment>
<comment type="disruption phenotype">
    <text evidence="4">Leads to enhanced fungal virulence, with faster decaying on infected fruits.</text>
</comment>
<comment type="miscellaneous">
    <text evidence="6">In plants, chitin acts as a microbe-associated molecular pattern (MAMP) that is recognized by lysin motif (LysM)-containing plant cell surface-localized pattern recognition receptors (PRRs) that activate a plethora of downstream immune responses.</text>
</comment>
<comment type="similarity">
    <text evidence="6">Belongs to the secreted LysM effector family.</text>
</comment>
<evidence type="ECO:0000255" key="1"/>
<evidence type="ECO:0000255" key="2">
    <source>
        <dbReference type="PROSITE-ProRule" id="PRU01118"/>
    </source>
</evidence>
<evidence type="ECO:0000256" key="3">
    <source>
        <dbReference type="SAM" id="MobiDB-lite"/>
    </source>
</evidence>
<evidence type="ECO:0000269" key="4">
    <source>
    </source>
</evidence>
<evidence type="ECO:0000303" key="5">
    <source>
    </source>
</evidence>
<evidence type="ECO:0000305" key="6"/>
<evidence type="ECO:0000305" key="7">
    <source>
    </source>
</evidence>